<name>RNH_PASMU</name>
<feature type="chain" id="PRO_0000195386" description="Ribonuclease HI">
    <location>
        <begin position="1"/>
        <end position="154"/>
    </location>
</feature>
<feature type="domain" description="RNase H type-1" evidence="2">
    <location>
        <begin position="1"/>
        <end position="142"/>
    </location>
</feature>
<feature type="binding site" evidence="1">
    <location>
        <position position="10"/>
    </location>
    <ligand>
        <name>Mg(2+)</name>
        <dbReference type="ChEBI" id="CHEBI:18420"/>
        <label>1</label>
    </ligand>
</feature>
<feature type="binding site" evidence="1">
    <location>
        <position position="10"/>
    </location>
    <ligand>
        <name>Mg(2+)</name>
        <dbReference type="ChEBI" id="CHEBI:18420"/>
        <label>2</label>
    </ligand>
</feature>
<feature type="binding site" evidence="1">
    <location>
        <position position="48"/>
    </location>
    <ligand>
        <name>Mg(2+)</name>
        <dbReference type="ChEBI" id="CHEBI:18420"/>
        <label>1</label>
    </ligand>
</feature>
<feature type="binding site" evidence="1">
    <location>
        <position position="70"/>
    </location>
    <ligand>
        <name>Mg(2+)</name>
        <dbReference type="ChEBI" id="CHEBI:18420"/>
        <label>1</label>
    </ligand>
</feature>
<feature type="binding site" evidence="1">
    <location>
        <position position="134"/>
    </location>
    <ligand>
        <name>Mg(2+)</name>
        <dbReference type="ChEBI" id="CHEBI:18420"/>
        <label>2</label>
    </ligand>
</feature>
<evidence type="ECO:0000250" key="1"/>
<evidence type="ECO:0000255" key="2">
    <source>
        <dbReference type="PROSITE-ProRule" id="PRU00408"/>
    </source>
</evidence>
<evidence type="ECO:0000305" key="3"/>
<gene>
    <name type="primary">rnhA</name>
    <name type="synonym">rnh</name>
    <name type="ordered locus">PM0107</name>
</gene>
<organism>
    <name type="scientific">Pasteurella multocida (strain Pm70)</name>
    <dbReference type="NCBI Taxonomy" id="272843"/>
    <lineage>
        <taxon>Bacteria</taxon>
        <taxon>Pseudomonadati</taxon>
        <taxon>Pseudomonadota</taxon>
        <taxon>Gammaproteobacteria</taxon>
        <taxon>Pasteurellales</taxon>
        <taxon>Pasteurellaceae</taxon>
        <taxon>Pasteurella</taxon>
    </lineage>
</organism>
<keyword id="KW-0963">Cytoplasm</keyword>
<keyword id="KW-0255">Endonuclease</keyword>
<keyword id="KW-0378">Hydrolase</keyword>
<keyword id="KW-0460">Magnesium</keyword>
<keyword id="KW-0479">Metal-binding</keyword>
<keyword id="KW-0540">Nuclease</keyword>
<keyword id="KW-1185">Reference proteome</keyword>
<proteinExistence type="inferred from homology"/>
<accession>P57813</accession>
<reference key="1">
    <citation type="journal article" date="2001" name="Proc. Natl. Acad. Sci. U.S.A.">
        <title>Complete genomic sequence of Pasteurella multocida Pm70.</title>
        <authorList>
            <person name="May B.J."/>
            <person name="Zhang Q."/>
            <person name="Li L.L."/>
            <person name="Paustian M.L."/>
            <person name="Whittam T.S."/>
            <person name="Kapur V."/>
        </authorList>
    </citation>
    <scope>NUCLEOTIDE SEQUENCE [LARGE SCALE GENOMIC DNA]</scope>
    <source>
        <strain>Pm70</strain>
    </source>
</reference>
<sequence length="154" mass="17556">MQKQIEIFTDGSCLGNPGPGGIGVLLRYKQHEKQISAGYFLTTNNRMELRAVIEALNTLKEPCSVTLHSDSQYMKNGITKWIFNWKKNNWKASTGKPVKNQDLWIQLDQAIQRHHINWQWVKGHSGHIENEICDQLAKAGAENPTLQDVGYQPE</sequence>
<comment type="function">
    <text evidence="1">Endonuclease that specifically degrades the RNA of RNA-DNA hybrids.</text>
</comment>
<comment type="catalytic activity">
    <reaction>
        <text>Endonucleolytic cleavage to 5'-phosphomonoester.</text>
        <dbReference type="EC" id="3.1.26.4"/>
    </reaction>
</comment>
<comment type="cofactor">
    <cofactor evidence="1">
        <name>Mg(2+)</name>
        <dbReference type="ChEBI" id="CHEBI:18420"/>
    </cofactor>
    <text evidence="1">Binds 1 Mg(2+) ion per subunit. May bind a second metal ion at a regulatory site, or after substrate binding.</text>
</comment>
<comment type="subunit">
    <text evidence="1">Monomer.</text>
</comment>
<comment type="subcellular location">
    <subcellularLocation>
        <location evidence="3">Cytoplasm</location>
    </subcellularLocation>
</comment>
<comment type="similarity">
    <text evidence="3">Belongs to the RNase H family.</text>
</comment>
<protein>
    <recommendedName>
        <fullName>Ribonuclease HI</fullName>
        <shortName>RNase HI</shortName>
        <ecNumber>3.1.26.4</ecNumber>
    </recommendedName>
</protein>
<dbReference type="EC" id="3.1.26.4"/>
<dbReference type="EMBL" id="AE004439">
    <property type="protein sequence ID" value="AAK02191.1"/>
    <property type="molecule type" value="Genomic_DNA"/>
</dbReference>
<dbReference type="RefSeq" id="WP_010906485.1">
    <property type="nucleotide sequence ID" value="NC_002663.1"/>
</dbReference>
<dbReference type="SMR" id="P57813"/>
<dbReference type="STRING" id="272843.PM0107"/>
<dbReference type="EnsemblBacteria" id="AAK02191">
    <property type="protein sequence ID" value="AAK02191"/>
    <property type="gene ID" value="PM0107"/>
</dbReference>
<dbReference type="KEGG" id="pmu:PM0107"/>
<dbReference type="PATRIC" id="fig|272843.6.peg.111"/>
<dbReference type="HOGENOM" id="CLU_030894_6_0_6"/>
<dbReference type="OrthoDB" id="7845843at2"/>
<dbReference type="Proteomes" id="UP000000809">
    <property type="component" value="Chromosome"/>
</dbReference>
<dbReference type="GO" id="GO:0005737">
    <property type="term" value="C:cytoplasm"/>
    <property type="evidence" value="ECO:0007669"/>
    <property type="project" value="UniProtKB-SubCell"/>
</dbReference>
<dbReference type="GO" id="GO:0000287">
    <property type="term" value="F:magnesium ion binding"/>
    <property type="evidence" value="ECO:0007669"/>
    <property type="project" value="UniProtKB-UniRule"/>
</dbReference>
<dbReference type="GO" id="GO:0003676">
    <property type="term" value="F:nucleic acid binding"/>
    <property type="evidence" value="ECO:0007669"/>
    <property type="project" value="InterPro"/>
</dbReference>
<dbReference type="GO" id="GO:0004523">
    <property type="term" value="F:RNA-DNA hybrid ribonuclease activity"/>
    <property type="evidence" value="ECO:0007669"/>
    <property type="project" value="UniProtKB-UniRule"/>
</dbReference>
<dbReference type="GO" id="GO:0043137">
    <property type="term" value="P:DNA replication, removal of RNA primer"/>
    <property type="evidence" value="ECO:0007669"/>
    <property type="project" value="TreeGrafter"/>
</dbReference>
<dbReference type="CDD" id="cd09278">
    <property type="entry name" value="RNase_HI_prokaryote_like"/>
    <property type="match status" value="1"/>
</dbReference>
<dbReference type="FunFam" id="3.30.420.10:FF:000008">
    <property type="entry name" value="Ribonuclease H"/>
    <property type="match status" value="1"/>
</dbReference>
<dbReference type="Gene3D" id="3.30.420.10">
    <property type="entry name" value="Ribonuclease H-like superfamily/Ribonuclease H"/>
    <property type="match status" value="1"/>
</dbReference>
<dbReference type="HAMAP" id="MF_00042">
    <property type="entry name" value="RNase_H"/>
    <property type="match status" value="1"/>
</dbReference>
<dbReference type="InterPro" id="IPR050092">
    <property type="entry name" value="RNase_H"/>
</dbReference>
<dbReference type="InterPro" id="IPR012337">
    <property type="entry name" value="RNaseH-like_sf"/>
</dbReference>
<dbReference type="InterPro" id="IPR002156">
    <property type="entry name" value="RNaseH_domain"/>
</dbReference>
<dbReference type="InterPro" id="IPR036397">
    <property type="entry name" value="RNaseH_sf"/>
</dbReference>
<dbReference type="InterPro" id="IPR022892">
    <property type="entry name" value="RNaseHI"/>
</dbReference>
<dbReference type="NCBIfam" id="NF001236">
    <property type="entry name" value="PRK00203.1"/>
    <property type="match status" value="1"/>
</dbReference>
<dbReference type="PANTHER" id="PTHR10642">
    <property type="entry name" value="RIBONUCLEASE H1"/>
    <property type="match status" value="1"/>
</dbReference>
<dbReference type="PANTHER" id="PTHR10642:SF26">
    <property type="entry name" value="RIBONUCLEASE H1"/>
    <property type="match status" value="1"/>
</dbReference>
<dbReference type="Pfam" id="PF00075">
    <property type="entry name" value="RNase_H"/>
    <property type="match status" value="1"/>
</dbReference>
<dbReference type="SUPFAM" id="SSF53098">
    <property type="entry name" value="Ribonuclease H-like"/>
    <property type="match status" value="1"/>
</dbReference>
<dbReference type="PROSITE" id="PS50879">
    <property type="entry name" value="RNASE_H_1"/>
    <property type="match status" value="1"/>
</dbReference>